<reference key="1">
    <citation type="journal article" date="1992" name="Virology">
        <title>Sequence analysis and editing of the phosphoprotein (P) gene of rinderpest virus.</title>
        <authorList>
            <person name="Yamanaka M."/>
            <person name="Dale B."/>
            <person name="Crisp T."/>
            <person name="Cordell B."/>
            <person name="Grubman M."/>
            <person name="Yilma T."/>
        </authorList>
    </citation>
    <scope>NUCLEOTIDE SEQUENCE [MRNA]</scope>
</reference>
<dbReference type="EMBL" id="S44819">
    <property type="protein sequence ID" value="AAB23269.1"/>
    <property type="molecule type" value="mRNA"/>
</dbReference>
<dbReference type="PIR" id="B43387">
    <property type="entry name" value="B43387"/>
</dbReference>
<dbReference type="RefSeq" id="YP_087122.1">
    <property type="nucleotide sequence ID" value="NC_006296.2"/>
</dbReference>
<dbReference type="KEGG" id="vg:3021779"/>
<dbReference type="OrthoDB" id="25672at10239"/>
<dbReference type="InterPro" id="IPR003875">
    <property type="entry name" value="Paramyxovir_NSC"/>
</dbReference>
<dbReference type="Pfam" id="PF02725">
    <property type="entry name" value="Paramyxo_NS_C"/>
    <property type="match status" value="1"/>
</dbReference>
<name>C_RINDK</name>
<organismHost>
    <name type="scientific">Bos indicus</name>
    <name type="common">Zebu</name>
    <dbReference type="NCBI Taxonomy" id="9915"/>
</organismHost>
<organismHost>
    <name type="scientific">Bos taurus</name>
    <name type="common">Bovine</name>
    <dbReference type="NCBI Taxonomy" id="9913"/>
</organismHost>
<organismHost>
    <name type="scientific">Bubalus bubalis</name>
    <name type="common">Domestic water buffalo</name>
    <dbReference type="NCBI Taxonomy" id="89462"/>
</organismHost>
<organismHost>
    <name type="scientific">Capra hircus</name>
    <name type="common">Goat</name>
    <dbReference type="NCBI Taxonomy" id="9925"/>
</organismHost>
<organismHost>
    <name type="scientific">Gazella</name>
    <name type="common">gazelles</name>
    <dbReference type="NCBI Taxonomy" id="9933"/>
</organismHost>
<organismHost>
    <name type="scientific">Giraffa camelopardalis</name>
    <name type="common">Giraffe</name>
    <dbReference type="NCBI Taxonomy" id="9894"/>
</organismHost>
<organismHost>
    <name type="scientific">Hippopotamus</name>
    <dbReference type="NCBI Taxonomy" id="9832"/>
</organismHost>
<organismHost>
    <name type="scientific">Ovis aries</name>
    <name type="common">Sheep</name>
    <dbReference type="NCBI Taxonomy" id="9940"/>
</organismHost>
<organismHost>
    <name type="scientific">Suidae</name>
    <name type="common">pigs</name>
    <dbReference type="NCBI Taxonomy" id="9821"/>
</organismHost>
<gene>
    <name type="primary">P/V/C</name>
</gene>
<proteinExistence type="evidence at transcript level"/>
<protein>
    <recommendedName>
        <fullName>Protein C</fullName>
    </recommendedName>
</protein>
<comment type="similarity">
    <text evidence="2">Belongs to the morbillivirus protein C family.</text>
</comment>
<evidence type="ECO:0000256" key="1">
    <source>
        <dbReference type="SAM" id="MobiDB-lite"/>
    </source>
</evidence>
<evidence type="ECO:0000305" key="2"/>
<organism>
    <name type="scientific">Rinderpest virus (strain Kabete O)</name>
    <name type="common">RDV</name>
    <dbReference type="NCBI Taxonomy" id="11242"/>
    <lineage>
        <taxon>Viruses</taxon>
        <taxon>Riboviria</taxon>
        <taxon>Orthornavirae</taxon>
        <taxon>Negarnaviricota</taxon>
        <taxon>Haploviricotina</taxon>
        <taxon>Monjiviricetes</taxon>
        <taxon>Mononegavirales</taxon>
        <taxon>Paramyxoviridae</taxon>
        <taxon>Orthoparamyxovirinae</taxon>
        <taxon>Morbillivirus</taxon>
        <taxon>Morbillivirus pecoris</taxon>
        <taxon>Rinderpest morbillivirus</taxon>
    </lineage>
</organism>
<feature type="chain" id="PRO_0000142804" description="Protein C">
    <location>
        <begin position="1"/>
        <end position="177"/>
    </location>
</feature>
<feature type="region of interest" description="Disordered" evidence="1">
    <location>
        <begin position="1"/>
        <end position="37"/>
    </location>
</feature>
<feature type="compositionally biased region" description="Polar residues" evidence="1">
    <location>
        <begin position="1"/>
        <end position="10"/>
    </location>
</feature>
<accession>P35948</accession>
<sequence>MSTKAWNASRLSGPDPSTPWSLKKPLQHGSRPPKGKRLTVCPPTRPKQTIRISASHASQQLDQAKAACLAVTIRDLEEATAVMRSWEHSLVTPQCIAPRYSIIMFMITAVKRLRESKMLTLSWFNQALMMVSKSGEEMRNLRTAMWILANLIPREVLPLTGDLLPSLQQQEPPMLKQ</sequence>